<evidence type="ECO:0000255" key="1">
    <source>
        <dbReference type="HAMAP-Rule" id="MF_02113"/>
    </source>
</evidence>
<sequence length="200" mass="22149">MTTTVGIAVKEGVVLATDKRVTAGYYIAHKQGEKIWKIDDHVAATMSGGVADLQSLLSFLTLRAREYKIEYKRPIPIRALVNYVSLILFYSRPYIYLVHSIIGGVDREEGAVLYMVDWLGTVTRERYIATGSGSPYAKGALEVGYREDMSLEDAVDLAIRSVKAAIRNDPGSGEGIDVVVITKEGFRRVFTAQQKIIITE</sequence>
<reference key="1">
    <citation type="submission" date="2006-12" db="EMBL/GenBank/DDBJ databases">
        <title>Complete sequence of Pyrobaculum islandicum DSM 4184.</title>
        <authorList>
            <person name="Copeland A."/>
            <person name="Lucas S."/>
            <person name="Lapidus A."/>
            <person name="Barry K."/>
            <person name="Detter J.C."/>
            <person name="Glavina del Rio T."/>
            <person name="Dalin E."/>
            <person name="Tice H."/>
            <person name="Pitluck S."/>
            <person name="Meincke L."/>
            <person name="Brettin T."/>
            <person name="Bruce D."/>
            <person name="Han C."/>
            <person name="Tapia R."/>
            <person name="Gilna P."/>
            <person name="Schmutz J."/>
            <person name="Larimer F."/>
            <person name="Land M."/>
            <person name="Hauser L."/>
            <person name="Kyrpides N."/>
            <person name="Mikhailova N."/>
            <person name="Cozen A.E."/>
            <person name="Fitz-Gibbon S.T."/>
            <person name="House C.H."/>
            <person name="Saltikov C."/>
            <person name="Lowe T."/>
            <person name="Richardson P."/>
        </authorList>
    </citation>
    <scope>NUCLEOTIDE SEQUENCE [LARGE SCALE GENOMIC DNA]</scope>
    <source>
        <strain>DSM 4184 / JCM 9189 / GEO3</strain>
    </source>
</reference>
<protein>
    <recommendedName>
        <fullName evidence="1">Proteasome subunit beta 2</fullName>
        <ecNumber evidence="1">3.4.25.1</ecNumber>
    </recommendedName>
    <alternativeName>
        <fullName evidence="1">20S proteasome beta subunit 2</fullName>
    </alternativeName>
    <alternativeName>
        <fullName evidence="1">Proteasome core protein PsmB 2</fullName>
    </alternativeName>
</protein>
<organism>
    <name type="scientific">Pyrobaculum islandicum (strain DSM 4184 / JCM 9189 / GEO3)</name>
    <dbReference type="NCBI Taxonomy" id="384616"/>
    <lineage>
        <taxon>Archaea</taxon>
        <taxon>Thermoproteota</taxon>
        <taxon>Thermoprotei</taxon>
        <taxon>Thermoproteales</taxon>
        <taxon>Thermoproteaceae</taxon>
        <taxon>Pyrobaculum</taxon>
    </lineage>
</organism>
<gene>
    <name evidence="1" type="primary">psmB2</name>
    <name type="ordered locus">Pisl_1097</name>
</gene>
<name>PSB2_PYRIL</name>
<keyword id="KW-0068">Autocatalytic cleavage</keyword>
<keyword id="KW-0963">Cytoplasm</keyword>
<keyword id="KW-0378">Hydrolase</keyword>
<keyword id="KW-0645">Protease</keyword>
<keyword id="KW-0647">Proteasome</keyword>
<keyword id="KW-0888">Threonine protease</keyword>
<keyword id="KW-0865">Zymogen</keyword>
<proteinExistence type="inferred from homology"/>
<comment type="function">
    <text evidence="1">Component of the proteasome core, a large protease complex with broad specificity involved in protein degradation.</text>
</comment>
<comment type="catalytic activity">
    <reaction evidence="1">
        <text>Cleavage of peptide bonds with very broad specificity.</text>
        <dbReference type="EC" id="3.4.25.1"/>
    </reaction>
</comment>
<comment type="activity regulation">
    <text evidence="1">The formation of the proteasomal ATPase PAN-20S proteasome complex, via the docking of the C-termini of PAN into the intersubunit pockets in the alpha-rings, triggers opening of the gate for substrate entry. Interconversion between the open-gate and close-gate conformations leads to a dynamic regulation of the 20S proteasome proteolysis activity.</text>
</comment>
<comment type="subunit">
    <text evidence="1">The 20S proteasome core is composed of 14 alpha and 14 beta subunits that assemble into four stacked heptameric rings, resulting in a barrel-shaped structure. The two inner rings, each composed of seven catalytic beta subunits, are sandwiched by two outer rings, each composed of seven alpha subunits. The catalytic chamber with the active sites is on the inside of the barrel. Has a gated structure, the ends of the cylinder being occluded by the N-termini of the alpha-subunits. Is capped at one or both ends by the proteasome regulatory ATPase, PAN.</text>
</comment>
<comment type="subcellular location">
    <subcellularLocation>
        <location evidence="1">Cytoplasm</location>
    </subcellularLocation>
</comment>
<comment type="similarity">
    <text evidence="1">Belongs to the peptidase T1B family.</text>
</comment>
<dbReference type="EC" id="3.4.25.1" evidence="1"/>
<dbReference type="EMBL" id="CP000504">
    <property type="protein sequence ID" value="ABL88269.1"/>
    <property type="molecule type" value="Genomic_DNA"/>
</dbReference>
<dbReference type="RefSeq" id="WP_011762844.1">
    <property type="nucleotide sequence ID" value="NC_008701.1"/>
</dbReference>
<dbReference type="SMR" id="A1RTI7"/>
<dbReference type="STRING" id="384616.Pisl_1097"/>
<dbReference type="MEROPS" id="T01.002"/>
<dbReference type="GeneID" id="4618285"/>
<dbReference type="KEGG" id="pis:Pisl_1097"/>
<dbReference type="eggNOG" id="arCOG00970">
    <property type="taxonomic scope" value="Archaea"/>
</dbReference>
<dbReference type="HOGENOM" id="CLU_035750_7_2_2"/>
<dbReference type="OrthoDB" id="6330at2157"/>
<dbReference type="Proteomes" id="UP000002595">
    <property type="component" value="Chromosome"/>
</dbReference>
<dbReference type="GO" id="GO:0005737">
    <property type="term" value="C:cytoplasm"/>
    <property type="evidence" value="ECO:0007669"/>
    <property type="project" value="UniProtKB-SubCell"/>
</dbReference>
<dbReference type="GO" id="GO:0019774">
    <property type="term" value="C:proteasome core complex, beta-subunit complex"/>
    <property type="evidence" value="ECO:0007669"/>
    <property type="project" value="UniProtKB-UniRule"/>
</dbReference>
<dbReference type="GO" id="GO:0004298">
    <property type="term" value="F:threonine-type endopeptidase activity"/>
    <property type="evidence" value="ECO:0007669"/>
    <property type="project" value="UniProtKB-UniRule"/>
</dbReference>
<dbReference type="GO" id="GO:0010498">
    <property type="term" value="P:proteasomal protein catabolic process"/>
    <property type="evidence" value="ECO:0007669"/>
    <property type="project" value="UniProtKB-UniRule"/>
</dbReference>
<dbReference type="CDD" id="cd03764">
    <property type="entry name" value="proteasome_beta_archeal"/>
    <property type="match status" value="1"/>
</dbReference>
<dbReference type="FunFam" id="3.60.20.10:FF:000049">
    <property type="entry name" value="Proteasome subunit beta"/>
    <property type="match status" value="1"/>
</dbReference>
<dbReference type="Gene3D" id="3.60.20.10">
    <property type="entry name" value="Glutamine Phosphoribosylpyrophosphate, subunit 1, domain 1"/>
    <property type="match status" value="1"/>
</dbReference>
<dbReference type="HAMAP" id="MF_02113_A">
    <property type="entry name" value="Proteasome_B_A"/>
    <property type="match status" value="1"/>
</dbReference>
<dbReference type="InterPro" id="IPR029055">
    <property type="entry name" value="Ntn_hydrolases_N"/>
</dbReference>
<dbReference type="InterPro" id="IPR019983">
    <property type="entry name" value="Pept_T1A_Psome_bsu_arc"/>
</dbReference>
<dbReference type="InterPro" id="IPR000243">
    <property type="entry name" value="Pept_T1A_subB"/>
</dbReference>
<dbReference type="InterPro" id="IPR016050">
    <property type="entry name" value="Proteasome_bsu_CS"/>
</dbReference>
<dbReference type="InterPro" id="IPR001353">
    <property type="entry name" value="Proteasome_sua/b"/>
</dbReference>
<dbReference type="InterPro" id="IPR023333">
    <property type="entry name" value="Proteasome_suB-type"/>
</dbReference>
<dbReference type="PANTHER" id="PTHR32194:SF0">
    <property type="entry name" value="ATP-DEPENDENT PROTEASE SUBUNIT HSLV"/>
    <property type="match status" value="1"/>
</dbReference>
<dbReference type="PANTHER" id="PTHR32194">
    <property type="entry name" value="METALLOPROTEASE TLDD"/>
    <property type="match status" value="1"/>
</dbReference>
<dbReference type="Pfam" id="PF00227">
    <property type="entry name" value="Proteasome"/>
    <property type="match status" value="1"/>
</dbReference>
<dbReference type="PRINTS" id="PR00141">
    <property type="entry name" value="PROTEASOME"/>
</dbReference>
<dbReference type="SUPFAM" id="SSF56235">
    <property type="entry name" value="N-terminal nucleophile aminohydrolases (Ntn hydrolases)"/>
    <property type="match status" value="1"/>
</dbReference>
<dbReference type="PROSITE" id="PS00854">
    <property type="entry name" value="PROTEASOME_BETA_1"/>
    <property type="match status" value="1"/>
</dbReference>
<dbReference type="PROSITE" id="PS51476">
    <property type="entry name" value="PROTEASOME_BETA_2"/>
    <property type="match status" value="1"/>
</dbReference>
<feature type="propeptide" id="PRO_0000397406" description="Removed in mature form; by autocatalysis" evidence="1">
    <location>
        <position position="1"/>
    </location>
</feature>
<feature type="chain" id="PRO_0000397407" description="Proteasome subunit beta 2">
    <location>
        <begin position="2"/>
        <end position="200"/>
    </location>
</feature>
<feature type="active site" description="Nucleophile" evidence="1">
    <location>
        <position position="2"/>
    </location>
</feature>
<accession>A1RTI7</accession>